<dbReference type="EMBL" id="CH408031">
    <property type="protein sequence ID" value="EAQ89995.1"/>
    <property type="status" value="ALT_SEQ"/>
    <property type="molecule type" value="Genomic_DNA"/>
</dbReference>
<dbReference type="RefSeq" id="XP_001222709.1">
    <property type="nucleotide sequence ID" value="XM_001222708.1"/>
</dbReference>
<dbReference type="SMR" id="Q2H401"/>
<dbReference type="FunCoup" id="Q2H401">
    <property type="interactions" value="567"/>
</dbReference>
<dbReference type="STRING" id="306901.Q2H401"/>
<dbReference type="GeneID" id="4391125"/>
<dbReference type="VEuPathDB" id="FungiDB:CHGG_06614"/>
<dbReference type="HOGENOM" id="CLU_409367_0_0_1"/>
<dbReference type="InParanoid" id="Q2H401"/>
<dbReference type="OrthoDB" id="204958at2759"/>
<dbReference type="Proteomes" id="UP000001056">
    <property type="component" value="Unassembled WGS sequence"/>
</dbReference>
<dbReference type="GO" id="GO:0000932">
    <property type="term" value="C:P-body"/>
    <property type="evidence" value="ECO:0007669"/>
    <property type="project" value="TreeGrafter"/>
</dbReference>
<dbReference type="GO" id="GO:0031251">
    <property type="term" value="C:PAN complex"/>
    <property type="evidence" value="ECO:0007669"/>
    <property type="project" value="UniProtKB-UniRule"/>
</dbReference>
<dbReference type="GO" id="GO:0005524">
    <property type="term" value="F:ATP binding"/>
    <property type="evidence" value="ECO:0007669"/>
    <property type="project" value="UniProtKB-UniRule"/>
</dbReference>
<dbReference type="GO" id="GO:0008143">
    <property type="term" value="F:poly(A) binding"/>
    <property type="evidence" value="ECO:0007669"/>
    <property type="project" value="TreeGrafter"/>
</dbReference>
<dbReference type="GO" id="GO:0004672">
    <property type="term" value="F:protein kinase activity"/>
    <property type="evidence" value="ECO:0007669"/>
    <property type="project" value="InterPro"/>
</dbReference>
<dbReference type="GO" id="GO:0008270">
    <property type="term" value="F:zinc ion binding"/>
    <property type="evidence" value="ECO:0007669"/>
    <property type="project" value="UniProtKB-KW"/>
</dbReference>
<dbReference type="GO" id="GO:0006397">
    <property type="term" value="P:mRNA processing"/>
    <property type="evidence" value="ECO:0007669"/>
    <property type="project" value="UniProtKB-KW"/>
</dbReference>
<dbReference type="GO" id="GO:0000289">
    <property type="term" value="P:nuclear-transcribed mRNA poly(A) tail shortening"/>
    <property type="evidence" value="ECO:0007669"/>
    <property type="project" value="UniProtKB-UniRule"/>
</dbReference>
<dbReference type="Gene3D" id="1.10.287.3700">
    <property type="match status" value="1"/>
</dbReference>
<dbReference type="Gene3D" id="1.20.5.5160">
    <property type="match status" value="1"/>
</dbReference>
<dbReference type="Gene3D" id="6.10.250.3160">
    <property type="match status" value="1"/>
</dbReference>
<dbReference type="Gene3D" id="1.10.510.10">
    <property type="entry name" value="Transferase(Phosphotransferase) domain 1"/>
    <property type="match status" value="1"/>
</dbReference>
<dbReference type="HAMAP" id="MF_03181">
    <property type="entry name" value="PAN3"/>
    <property type="match status" value="1"/>
</dbReference>
<dbReference type="InterPro" id="IPR011009">
    <property type="entry name" value="Kinase-like_dom_sf"/>
</dbReference>
<dbReference type="InterPro" id="IPR030844">
    <property type="entry name" value="PAN3"/>
</dbReference>
<dbReference type="InterPro" id="IPR041332">
    <property type="entry name" value="Pan3_PK"/>
</dbReference>
<dbReference type="InterPro" id="IPR000719">
    <property type="entry name" value="Prot_kinase_dom"/>
</dbReference>
<dbReference type="InterPro" id="IPR000571">
    <property type="entry name" value="Znf_CCCH"/>
</dbReference>
<dbReference type="PANTHER" id="PTHR12272">
    <property type="entry name" value="DEADENYLATION COMPLEX SUBUNIT PAN3"/>
    <property type="match status" value="1"/>
</dbReference>
<dbReference type="PANTHER" id="PTHR12272:SF11">
    <property type="entry name" value="PAN2-PAN3 DEADENYLATION COMPLEX SUBUNIT PAN3"/>
    <property type="match status" value="1"/>
</dbReference>
<dbReference type="Pfam" id="PF18101">
    <property type="entry name" value="Pan3_PK"/>
    <property type="match status" value="1"/>
</dbReference>
<dbReference type="SMART" id="SM00220">
    <property type="entry name" value="S_TKc"/>
    <property type="match status" value="1"/>
</dbReference>
<dbReference type="SUPFAM" id="SSF56112">
    <property type="entry name" value="Protein kinase-like (PK-like)"/>
    <property type="match status" value="1"/>
</dbReference>
<dbReference type="PROSITE" id="PS50011">
    <property type="entry name" value="PROTEIN_KINASE_DOM"/>
    <property type="match status" value="1"/>
</dbReference>
<dbReference type="PROSITE" id="PS50103">
    <property type="entry name" value="ZF_C3H1"/>
    <property type="match status" value="1"/>
</dbReference>
<evidence type="ECO:0000255" key="1">
    <source>
        <dbReference type="HAMAP-Rule" id="MF_03181"/>
    </source>
</evidence>
<evidence type="ECO:0000256" key="2">
    <source>
        <dbReference type="SAM" id="MobiDB-lite"/>
    </source>
</evidence>
<evidence type="ECO:0000305" key="3"/>
<proteinExistence type="inferred from homology"/>
<accession>Q2H401</accession>
<sequence length="648" mass="72560">MAATRYPPNDLRRQVGSPRSKGRENKDTLCRNILIYGNCRYEDQGCTFNHDQNKNPSPQADFSKKTFNVDSPAFTPSSQPQVLAKKTTLSSQAANAAPFTPRGAGTPNLQQTAEASVFNPAAIREFTPQNYDIGNTNSNGVPQENGIYSDPFTTMGSLGSTLPSAGQYNLYASDHNSLGGPGAQFYPQHGSFPAGPLQPPNYHLYQPHDSYRQELQPWQRATYDFFIPAKMREELQKKMFATQQVMPNSGLPQLERWHSLFPLDTNNRKNTSSFGYPSWVYKAQNSRTARHYALRRLEGYRLTNEKAILTVMKEWKKIKNGNVVTVHEAFTTREFGDSSLIFAYDYHPLSKTLQEHHLQPTHGNRYRAPSAVPENVLWGYICQITNALKTIHSNKLAARCLEPSKIILSDNNRIRLSACSILDVVQFESNTKSVAELQQEDLVKFGKLILALATGAPPAHLNNIQVALDSLVTKYSANLKDAVAWLIAPSNPGESKSIENFISGIATHMTAFFDLALQDGDEKQFHLARELENGRIARSMMKLMTIIERAEPGGAQSWSETGERYQLKLFRDYVFHRVEADGKPNLAVGHMLSCLSKLDAGIDEMVVLTSRDNETVFVLSYRELKQMFDRAFNELVKHSKTGAPGANN</sequence>
<protein>
    <recommendedName>
        <fullName evidence="1">PAN2-PAN3 deadenylation complex subunit PAN3</fullName>
    </recommendedName>
    <alternativeName>
        <fullName evidence="1">PAB1P-dependent poly(A)-specific ribonuclease</fullName>
    </alternativeName>
    <alternativeName>
        <fullName evidence="1">Poly(A)-nuclease deadenylation complex subunit 3</fullName>
        <shortName evidence="1">PAN deadenylation complex subunit 3</shortName>
    </alternativeName>
</protein>
<organism>
    <name type="scientific">Chaetomium globosum (strain ATCC 6205 / CBS 148.51 / DSM 1962 / NBRC 6347 / NRRL 1970)</name>
    <name type="common">Soil fungus</name>
    <dbReference type="NCBI Taxonomy" id="306901"/>
    <lineage>
        <taxon>Eukaryota</taxon>
        <taxon>Fungi</taxon>
        <taxon>Dikarya</taxon>
        <taxon>Ascomycota</taxon>
        <taxon>Pezizomycotina</taxon>
        <taxon>Sordariomycetes</taxon>
        <taxon>Sordariomycetidae</taxon>
        <taxon>Sordariales</taxon>
        <taxon>Chaetomiaceae</taxon>
        <taxon>Chaetomium</taxon>
    </lineage>
</organism>
<reference key="1">
    <citation type="journal article" date="2015" name="Genome Announc.">
        <title>Draft genome sequence of the cellulolytic fungus Chaetomium globosum.</title>
        <authorList>
            <person name="Cuomo C.A."/>
            <person name="Untereiner W.A."/>
            <person name="Ma L.-J."/>
            <person name="Grabherr M."/>
            <person name="Birren B.W."/>
        </authorList>
    </citation>
    <scope>NUCLEOTIDE SEQUENCE [LARGE SCALE GENOMIC DNA]</scope>
    <source>
        <strain>ATCC 6205 / CBS 148.51 / DSM 1962 / NBRC 6347 / NRRL 1970</strain>
    </source>
</reference>
<feature type="chain" id="PRO_0000295364" description="PAN2-PAN3 deadenylation complex subunit PAN3">
    <location>
        <begin position="1"/>
        <end position="648"/>
    </location>
</feature>
<feature type="zinc finger region" description="C3H1-type" evidence="1">
    <location>
        <begin position="24"/>
        <end position="53"/>
    </location>
</feature>
<feature type="region of interest" description="Disordered" evidence="2">
    <location>
        <begin position="1"/>
        <end position="24"/>
    </location>
</feature>
<feature type="region of interest" description="Pseudokinase domain" evidence="1">
    <location>
        <begin position="244"/>
        <end position="506"/>
    </location>
</feature>
<feature type="region of interest" description="Knob domain" evidence="1">
    <location>
        <begin position="546"/>
        <end position="648"/>
    </location>
</feature>
<feature type="coiled-coil region" evidence="1">
    <location>
        <begin position="507"/>
        <end position="545"/>
    </location>
</feature>
<feature type="binding site" evidence="1">
    <location>
        <position position="295"/>
    </location>
    <ligand>
        <name>ATP</name>
        <dbReference type="ChEBI" id="CHEBI:30616"/>
    </ligand>
</feature>
<feature type="binding site" evidence="1">
    <location>
        <begin position="345"/>
        <end position="352"/>
    </location>
    <ligand>
        <name>ATP</name>
        <dbReference type="ChEBI" id="CHEBI:30616"/>
    </ligand>
</feature>
<feature type="binding site" evidence="1">
    <location>
        <begin position="404"/>
        <end position="405"/>
    </location>
    <ligand>
        <name>ATP</name>
        <dbReference type="ChEBI" id="CHEBI:30616"/>
    </ligand>
</feature>
<gene>
    <name evidence="1" type="primary">PAN3</name>
    <name type="ORF">CHGG_06614</name>
</gene>
<name>PAN3_CHAGB</name>
<keyword id="KW-0067">ATP-binding</keyword>
<keyword id="KW-0175">Coiled coil</keyword>
<keyword id="KW-0963">Cytoplasm</keyword>
<keyword id="KW-0479">Metal-binding</keyword>
<keyword id="KW-0507">mRNA processing</keyword>
<keyword id="KW-0547">Nucleotide-binding</keyword>
<keyword id="KW-1185">Reference proteome</keyword>
<keyword id="KW-0862">Zinc</keyword>
<keyword id="KW-0863">Zinc-finger</keyword>
<comment type="function">
    <text evidence="1">Regulatory subunit of the poly(A)-nuclease (PAN) deadenylation complex, one of two cytoplasmic mRNA deadenylases involved in mRNA turnover. PAN specifically shortens poly(A) tails of RNA and the activity is stimulated by poly(A)-binding protein PAB1. PAN deadenylation is followed by rapid degradation of the shortened mRNA tails by the CCR4-NOT complex. Deadenylated mRNAs are then degraded by two alternative mechanisms, namely exosome-mediated 3'-5' exonucleolytic degradation, or deadenylation-dependent mRNA decaping and subsequent 5'-3' exonucleolytic degradation by XRN1. May also be involved in post-transcriptional maturation of mRNA poly(A) tails. PAN3 acts as a positive regulator for PAN activity, recruiting the catalytic subunit PAN2 to mRNA via its interaction with RNA and with PAB1.</text>
</comment>
<comment type="subunit">
    <text evidence="1">Homodimer. Forms a heterotrimer with a catalytic subunit PAN2 to form the poly(A)-nuclease (PAN) deadenylation complex. Interacts (via PAM-2 motif) with poly(A)-binding protein PAB1 (via PABC domain), conferring substrate specificity of the enzyme complex.</text>
</comment>
<comment type="subcellular location">
    <subcellularLocation>
        <location evidence="1">Cytoplasm</location>
    </subcellularLocation>
</comment>
<comment type="domain">
    <text evidence="1">The N-terminal zinc finger binds to poly(A) RNA.</text>
</comment>
<comment type="domain">
    <text evidence="1">Contains a pseudokinase domain. The protein kinase domain is predicted to be catalytically inactive because some of the residues important for catalytic activity are substituted and it lacks the equivalent of the binding site for a peptide substrate. However, it has retained an ATP-binding site and ATP-binding is required for mRNA degradation, stimulating the activity of the PAN2 nuclease in vitro. The nucleotide-binding site is juxtaposed to the RNase active site of PAN2 in the complex and may actually bind nucleosides of a poly(A) RNA rather than ATP, feeding the poly(A)-tail to the active site of the deadenylase and thus increasing the efficiency with which this distributive enzyme degrades oligo(A) RNAs.</text>
</comment>
<comment type="domain">
    <text evidence="1">The pseudokinase domain, the coiled-coil (CC), and C-terminal knob domain (CK) form a structural unit (PKC) that forms an extensive high-affinity interaction surface for PAN2.</text>
</comment>
<comment type="similarity">
    <text evidence="1">Belongs to the protein kinase superfamily. PAN3 family.</text>
</comment>
<comment type="sequence caution" evidence="3">
    <conflict type="erroneous gene model prediction">
        <sequence resource="EMBL-CDS" id="EAQ89995"/>
    </conflict>
</comment>
<comment type="sequence caution" evidence="3">
    <conflict type="frameshift">
        <sequence resource="EMBL-CDS" id="EAQ89995"/>
    </conflict>
</comment>